<protein>
    <recommendedName>
        <fullName evidence="1">tRNA-splicing endonuclease</fullName>
        <ecNumber evidence="1">4.6.1.16</ecNumber>
    </recommendedName>
    <alternativeName>
        <fullName evidence="1">tRNA-intron endonuclease</fullName>
    </alternativeName>
</protein>
<dbReference type="EC" id="4.6.1.16" evidence="1"/>
<dbReference type="EMBL" id="BA000023">
    <property type="protein sequence ID" value="BAK54248.1"/>
    <property type="molecule type" value="Genomic_DNA"/>
</dbReference>
<dbReference type="RefSeq" id="WP_010978320.1">
    <property type="nucleotide sequence ID" value="NC_003106.2"/>
</dbReference>
<dbReference type="PDB" id="2CV8">
    <property type="method" value="X-ray"/>
    <property type="resolution" value="2.80 A"/>
    <property type="chains" value="A/B=1-180"/>
</dbReference>
<dbReference type="PDBsum" id="2CV8"/>
<dbReference type="SMR" id="Q975R3"/>
<dbReference type="STRING" id="273063.STK_03580"/>
<dbReference type="GeneID" id="1458281"/>
<dbReference type="KEGG" id="sto:STK_03580"/>
<dbReference type="PATRIC" id="fig|273063.9.peg.416"/>
<dbReference type="eggNOG" id="arCOG01701">
    <property type="taxonomic scope" value="Archaea"/>
</dbReference>
<dbReference type="OrthoDB" id="46045at2157"/>
<dbReference type="BRENDA" id="3.1.27.B1">
    <property type="organism ID" value="15396"/>
</dbReference>
<dbReference type="BRENDA" id="4.6.1.16">
    <property type="organism ID" value="15396"/>
</dbReference>
<dbReference type="EvolutionaryTrace" id="Q975R3"/>
<dbReference type="Proteomes" id="UP000001015">
    <property type="component" value="Chromosome"/>
</dbReference>
<dbReference type="GO" id="GO:0005737">
    <property type="term" value="C:cytoplasm"/>
    <property type="evidence" value="ECO:0007669"/>
    <property type="project" value="TreeGrafter"/>
</dbReference>
<dbReference type="GO" id="GO:0016829">
    <property type="term" value="F:lyase activity"/>
    <property type="evidence" value="ECO:0007669"/>
    <property type="project" value="UniProtKB-KW"/>
</dbReference>
<dbReference type="GO" id="GO:0003676">
    <property type="term" value="F:nucleic acid binding"/>
    <property type="evidence" value="ECO:0007669"/>
    <property type="project" value="InterPro"/>
</dbReference>
<dbReference type="GO" id="GO:0000213">
    <property type="term" value="F:tRNA-intron endonuclease activity"/>
    <property type="evidence" value="ECO:0007669"/>
    <property type="project" value="UniProtKB-UniRule"/>
</dbReference>
<dbReference type="GO" id="GO:0006388">
    <property type="term" value="P:tRNA splicing, via endonucleolytic cleavage and ligation"/>
    <property type="evidence" value="ECO:0007669"/>
    <property type="project" value="UniProtKB-UniRule"/>
</dbReference>
<dbReference type="CDD" id="cd22363">
    <property type="entry name" value="tRNA-intron_lyase_C"/>
    <property type="match status" value="1"/>
</dbReference>
<dbReference type="FunFam" id="3.40.1350.10:FF:000006">
    <property type="entry name" value="tRNA-splicing endonuclease"/>
    <property type="match status" value="1"/>
</dbReference>
<dbReference type="Gene3D" id="3.40.1350.10">
    <property type="match status" value="1"/>
</dbReference>
<dbReference type="Gene3D" id="3.40.1170.20">
    <property type="entry name" value="tRNA intron endonuclease, N-terminal domain"/>
    <property type="match status" value="1"/>
</dbReference>
<dbReference type="HAMAP" id="MF_01833">
    <property type="entry name" value="EndA_short"/>
    <property type="match status" value="1"/>
</dbReference>
<dbReference type="InterPro" id="IPR011856">
    <property type="entry name" value="tRNA_endonuc-like_dom_sf"/>
</dbReference>
<dbReference type="InterPro" id="IPR036167">
    <property type="entry name" value="tRNA_intron_Endo_cat-like_sf"/>
</dbReference>
<dbReference type="InterPro" id="IPR006677">
    <property type="entry name" value="tRNA_intron_Endonuc_cat-like"/>
</dbReference>
<dbReference type="InterPro" id="IPR006678">
    <property type="entry name" value="tRNA_intron_Endonuc_N"/>
</dbReference>
<dbReference type="InterPro" id="IPR036740">
    <property type="entry name" value="tRNA_intron_Endonuc_N_sf"/>
</dbReference>
<dbReference type="InterPro" id="IPR006676">
    <property type="entry name" value="tRNA_splic"/>
</dbReference>
<dbReference type="InterPro" id="IPR016442">
    <property type="entry name" value="tRNA_splic_arch_short"/>
</dbReference>
<dbReference type="NCBIfam" id="TIGR00324">
    <property type="entry name" value="endA"/>
    <property type="match status" value="1"/>
</dbReference>
<dbReference type="PANTHER" id="PTHR21227">
    <property type="entry name" value="TRNA-SPLICING ENDONUCLEASE SUBUNIT SEN2"/>
    <property type="match status" value="1"/>
</dbReference>
<dbReference type="PANTHER" id="PTHR21227:SF0">
    <property type="entry name" value="TRNA-SPLICING ENDONUCLEASE SUBUNIT SEN2"/>
    <property type="match status" value="1"/>
</dbReference>
<dbReference type="Pfam" id="PF01974">
    <property type="entry name" value="tRNA_int_endo"/>
    <property type="match status" value="1"/>
</dbReference>
<dbReference type="Pfam" id="PF02778">
    <property type="entry name" value="tRNA_int_endo_N"/>
    <property type="match status" value="1"/>
</dbReference>
<dbReference type="PIRSF" id="PIRSF005285">
    <property type="entry name" value="tRNA_splic_archaea"/>
    <property type="match status" value="1"/>
</dbReference>
<dbReference type="SUPFAM" id="SSF53032">
    <property type="entry name" value="tRNA-intron endonuclease catalytic domain-like"/>
    <property type="match status" value="1"/>
</dbReference>
<dbReference type="SUPFAM" id="SSF55267">
    <property type="entry name" value="tRNA-intron endonuclease N-terminal domain-like"/>
    <property type="match status" value="1"/>
</dbReference>
<sequence>MIGELVKDKILIKNIEDARLIYKMGYYGKPIGISKPKSAEEINSELILSLIEGVYLVKKGKLEIVSNGERLDFERLYQIGVTQIPRFRILYSVYEDLREKGYVVRSGIKYGADFAVYTIGPGIEHAPYLVIALDENSQISSNEILGFGRVSHSTRKELILGIVNLTNGKIRYIMFKWLKM</sequence>
<feature type="chain" id="PRO_0000109482" description="tRNA-splicing endonuclease">
    <location>
        <begin position="1"/>
        <end position="180"/>
    </location>
</feature>
<feature type="active site" evidence="1">
    <location>
        <position position="117"/>
    </location>
</feature>
<feature type="active site" evidence="1">
    <location>
        <position position="125"/>
    </location>
</feature>
<feature type="active site" evidence="1">
    <location>
        <position position="156"/>
    </location>
</feature>
<feature type="strand" evidence="2">
    <location>
        <begin position="2"/>
        <end position="6"/>
    </location>
</feature>
<feature type="strand" evidence="2">
    <location>
        <begin position="9"/>
        <end position="12"/>
    </location>
</feature>
<feature type="helix" evidence="2">
    <location>
        <begin position="15"/>
        <end position="25"/>
    </location>
</feature>
<feature type="strand" evidence="2">
    <location>
        <begin position="28"/>
        <end position="30"/>
    </location>
</feature>
<feature type="helix" evidence="2">
    <location>
        <begin position="39"/>
        <end position="41"/>
    </location>
</feature>
<feature type="strand" evidence="2">
    <location>
        <begin position="46"/>
        <end position="49"/>
    </location>
</feature>
<feature type="helix" evidence="2">
    <location>
        <begin position="50"/>
        <end position="58"/>
    </location>
</feature>
<feature type="strand" evidence="2">
    <location>
        <begin position="63"/>
        <end position="66"/>
    </location>
</feature>
<feature type="strand" evidence="2">
    <location>
        <begin position="69"/>
        <end position="71"/>
    </location>
</feature>
<feature type="helix" evidence="2">
    <location>
        <begin position="73"/>
        <end position="83"/>
    </location>
</feature>
<feature type="helix" evidence="2">
    <location>
        <begin position="87"/>
        <end position="99"/>
    </location>
</feature>
<feature type="strand" evidence="2">
    <location>
        <begin position="103"/>
        <end position="106"/>
    </location>
</feature>
<feature type="helix" evidence="2">
    <location>
        <begin position="108"/>
        <end position="110"/>
    </location>
</feature>
<feature type="strand" evidence="2">
    <location>
        <begin position="112"/>
        <end position="117"/>
    </location>
</feature>
<feature type="strand" evidence="2">
    <location>
        <begin position="128"/>
        <end position="134"/>
    </location>
</feature>
<feature type="strand" evidence="2">
    <location>
        <begin position="138"/>
        <end position="140"/>
    </location>
</feature>
<feature type="helix" evidence="2">
    <location>
        <begin position="141"/>
        <end position="144"/>
    </location>
</feature>
<feature type="strand" evidence="2">
    <location>
        <begin position="147"/>
        <end position="149"/>
    </location>
</feature>
<feature type="turn" evidence="2">
    <location>
        <begin position="152"/>
        <end position="155"/>
    </location>
</feature>
<feature type="strand" evidence="2">
    <location>
        <begin position="157"/>
        <end position="163"/>
    </location>
</feature>
<feature type="turn" evidence="2">
    <location>
        <begin position="165"/>
        <end position="167"/>
    </location>
</feature>
<feature type="strand" evidence="2">
    <location>
        <begin position="170"/>
        <end position="178"/>
    </location>
</feature>
<accession>Q975R3</accession>
<accession>F9VMV1</accession>
<comment type="function">
    <text evidence="1">Endonuclease that removes tRNA introns. Cleaves pre-tRNA at the 5'- and 3'-splice sites to release the intron. The products are an intron and two tRNA half-molecules bearing 2',3' cyclic phosphate and 5'-OH termini. Recognizes a pseudosymmetric substrate in which 2 bulged loops of 3 bases are separated by a stem of 4 bp.</text>
</comment>
<comment type="catalytic activity">
    <reaction evidence="1">
        <text>pretRNA = a 3'-half-tRNA molecule with a 5'-OH end + a 5'-half-tRNA molecule with a 2',3'-cyclic phosphate end + an intron with a 2',3'-cyclic phosphate and a 5'-hydroxyl terminus.</text>
        <dbReference type="EC" id="4.6.1.16"/>
    </reaction>
</comment>
<comment type="subunit">
    <text evidence="1">Homotetramer; although the tetramer contains four active sites, only two participate in the cleavage. Therefore, it should be considered as a dimer of dimers.</text>
</comment>
<comment type="similarity">
    <text evidence="1">Belongs to the tRNA-intron endonuclease family. Archaeal short subfamily.</text>
</comment>
<proteinExistence type="evidence at protein level"/>
<evidence type="ECO:0000255" key="1">
    <source>
        <dbReference type="HAMAP-Rule" id="MF_01833"/>
    </source>
</evidence>
<evidence type="ECO:0007829" key="2">
    <source>
        <dbReference type="PDB" id="2CV8"/>
    </source>
</evidence>
<name>ENDA_SULTO</name>
<gene>
    <name evidence="1" type="primary">endA</name>
    <name type="ordered locus">STK_03580</name>
</gene>
<organism>
    <name type="scientific">Sulfurisphaera tokodaii (strain DSM 16993 / JCM 10545 / NBRC 100140 / 7)</name>
    <name type="common">Sulfolobus tokodaii</name>
    <dbReference type="NCBI Taxonomy" id="273063"/>
    <lineage>
        <taxon>Archaea</taxon>
        <taxon>Thermoproteota</taxon>
        <taxon>Thermoprotei</taxon>
        <taxon>Sulfolobales</taxon>
        <taxon>Sulfolobaceae</taxon>
        <taxon>Sulfurisphaera</taxon>
    </lineage>
</organism>
<keyword id="KW-0002">3D-structure</keyword>
<keyword id="KW-0456">Lyase</keyword>
<keyword id="KW-1185">Reference proteome</keyword>
<keyword id="KW-0819">tRNA processing</keyword>
<reference key="1">
    <citation type="journal article" date="2001" name="DNA Res.">
        <title>Complete genome sequence of an aerobic thermoacidophilic Crenarchaeon, Sulfolobus tokodaii strain7.</title>
        <authorList>
            <person name="Kawarabayasi Y."/>
            <person name="Hino Y."/>
            <person name="Horikawa H."/>
            <person name="Jin-no K."/>
            <person name="Takahashi M."/>
            <person name="Sekine M."/>
            <person name="Baba S."/>
            <person name="Ankai A."/>
            <person name="Kosugi H."/>
            <person name="Hosoyama A."/>
            <person name="Fukui S."/>
            <person name="Nagai Y."/>
            <person name="Nishijima K."/>
            <person name="Otsuka R."/>
            <person name="Nakazawa H."/>
            <person name="Takamiya M."/>
            <person name="Kato Y."/>
            <person name="Yoshizawa T."/>
            <person name="Tanaka T."/>
            <person name="Kudoh Y."/>
            <person name="Yamazaki J."/>
            <person name="Kushida N."/>
            <person name="Oguchi A."/>
            <person name="Aoki K."/>
            <person name="Masuda S."/>
            <person name="Yanagii M."/>
            <person name="Nishimura M."/>
            <person name="Yamagishi A."/>
            <person name="Oshima T."/>
            <person name="Kikuchi H."/>
        </authorList>
    </citation>
    <scope>NUCLEOTIDE SEQUENCE [LARGE SCALE GENOMIC DNA]</scope>
    <source>
        <strain>DSM 16993 / JCM 10545 / NBRC 100140 / 7</strain>
    </source>
</reference>